<dbReference type="EC" id="2.7.1.71" evidence="1"/>
<dbReference type="EMBL" id="BX571857">
    <property type="protein sequence ID" value="CAG43272.1"/>
    <property type="molecule type" value="Genomic_DNA"/>
</dbReference>
<dbReference type="RefSeq" id="WP_001015121.1">
    <property type="nucleotide sequence ID" value="NC_002953.3"/>
</dbReference>
<dbReference type="SMR" id="Q6G928"/>
<dbReference type="KEGG" id="sas:SAS1476"/>
<dbReference type="HOGENOM" id="CLU_057607_4_3_9"/>
<dbReference type="UniPathway" id="UPA00053">
    <property type="reaction ID" value="UER00088"/>
</dbReference>
<dbReference type="GO" id="GO:0005829">
    <property type="term" value="C:cytosol"/>
    <property type="evidence" value="ECO:0007669"/>
    <property type="project" value="TreeGrafter"/>
</dbReference>
<dbReference type="GO" id="GO:0005524">
    <property type="term" value="F:ATP binding"/>
    <property type="evidence" value="ECO:0007669"/>
    <property type="project" value="UniProtKB-UniRule"/>
</dbReference>
<dbReference type="GO" id="GO:0000287">
    <property type="term" value="F:magnesium ion binding"/>
    <property type="evidence" value="ECO:0007669"/>
    <property type="project" value="UniProtKB-UniRule"/>
</dbReference>
<dbReference type="GO" id="GO:0004765">
    <property type="term" value="F:shikimate kinase activity"/>
    <property type="evidence" value="ECO:0007669"/>
    <property type="project" value="UniProtKB-UniRule"/>
</dbReference>
<dbReference type="GO" id="GO:0008652">
    <property type="term" value="P:amino acid biosynthetic process"/>
    <property type="evidence" value="ECO:0007669"/>
    <property type="project" value="UniProtKB-KW"/>
</dbReference>
<dbReference type="GO" id="GO:0009073">
    <property type="term" value="P:aromatic amino acid family biosynthetic process"/>
    <property type="evidence" value="ECO:0007669"/>
    <property type="project" value="UniProtKB-KW"/>
</dbReference>
<dbReference type="GO" id="GO:0009423">
    <property type="term" value="P:chorismate biosynthetic process"/>
    <property type="evidence" value="ECO:0007669"/>
    <property type="project" value="UniProtKB-UniRule"/>
</dbReference>
<dbReference type="CDD" id="cd00464">
    <property type="entry name" value="SK"/>
    <property type="match status" value="1"/>
</dbReference>
<dbReference type="FunFam" id="3.40.50.300:FF:001734">
    <property type="entry name" value="Shikimate kinase"/>
    <property type="match status" value="1"/>
</dbReference>
<dbReference type="Gene3D" id="3.40.50.300">
    <property type="entry name" value="P-loop containing nucleotide triphosphate hydrolases"/>
    <property type="match status" value="1"/>
</dbReference>
<dbReference type="HAMAP" id="MF_00109">
    <property type="entry name" value="Shikimate_kinase"/>
    <property type="match status" value="1"/>
</dbReference>
<dbReference type="InterPro" id="IPR027417">
    <property type="entry name" value="P-loop_NTPase"/>
</dbReference>
<dbReference type="InterPro" id="IPR031322">
    <property type="entry name" value="Shikimate/glucono_kinase"/>
</dbReference>
<dbReference type="InterPro" id="IPR000623">
    <property type="entry name" value="Shikimate_kinase/TSH1"/>
</dbReference>
<dbReference type="InterPro" id="IPR023000">
    <property type="entry name" value="Shikimate_kinase_CS"/>
</dbReference>
<dbReference type="PANTHER" id="PTHR21087">
    <property type="entry name" value="SHIKIMATE KINASE"/>
    <property type="match status" value="1"/>
</dbReference>
<dbReference type="PANTHER" id="PTHR21087:SF16">
    <property type="entry name" value="SHIKIMATE KINASE 1, CHLOROPLASTIC"/>
    <property type="match status" value="1"/>
</dbReference>
<dbReference type="Pfam" id="PF01202">
    <property type="entry name" value="SKI"/>
    <property type="match status" value="1"/>
</dbReference>
<dbReference type="PRINTS" id="PR01100">
    <property type="entry name" value="SHIKIMTKNASE"/>
</dbReference>
<dbReference type="SUPFAM" id="SSF52540">
    <property type="entry name" value="P-loop containing nucleoside triphosphate hydrolases"/>
    <property type="match status" value="1"/>
</dbReference>
<dbReference type="PROSITE" id="PS01128">
    <property type="entry name" value="SHIKIMATE_KINASE"/>
    <property type="match status" value="1"/>
</dbReference>
<name>AROK_STAAS</name>
<feature type="chain" id="PRO_0000192414" description="Shikimate kinase">
    <location>
        <begin position="1"/>
        <end position="174"/>
    </location>
</feature>
<feature type="binding site" evidence="1">
    <location>
        <begin position="15"/>
        <end position="20"/>
    </location>
    <ligand>
        <name>ATP</name>
        <dbReference type="ChEBI" id="CHEBI:30616"/>
    </ligand>
</feature>
<feature type="binding site" evidence="1">
    <location>
        <position position="19"/>
    </location>
    <ligand>
        <name>Mg(2+)</name>
        <dbReference type="ChEBI" id="CHEBI:18420"/>
    </ligand>
</feature>
<feature type="binding site" evidence="1">
    <location>
        <position position="37"/>
    </location>
    <ligand>
        <name>substrate</name>
    </ligand>
</feature>
<feature type="binding site" evidence="1">
    <location>
        <position position="61"/>
    </location>
    <ligand>
        <name>substrate</name>
    </ligand>
</feature>
<feature type="binding site" evidence="1">
    <location>
        <position position="82"/>
    </location>
    <ligand>
        <name>substrate</name>
    </ligand>
</feature>
<feature type="binding site" evidence="1">
    <location>
        <position position="120"/>
    </location>
    <ligand>
        <name>ATP</name>
        <dbReference type="ChEBI" id="CHEBI:30616"/>
    </ligand>
</feature>
<feature type="binding site" evidence="1">
    <location>
        <position position="138"/>
    </location>
    <ligand>
        <name>substrate</name>
    </ligand>
</feature>
<protein>
    <recommendedName>
        <fullName evidence="1">Shikimate kinase</fullName>
        <shortName evidence="1">SK</shortName>
        <ecNumber evidence="1">2.7.1.71</ecNumber>
    </recommendedName>
</protein>
<proteinExistence type="inferred from homology"/>
<keyword id="KW-0028">Amino-acid biosynthesis</keyword>
<keyword id="KW-0057">Aromatic amino acid biosynthesis</keyword>
<keyword id="KW-0067">ATP-binding</keyword>
<keyword id="KW-0963">Cytoplasm</keyword>
<keyword id="KW-0418">Kinase</keyword>
<keyword id="KW-0460">Magnesium</keyword>
<keyword id="KW-0479">Metal-binding</keyword>
<keyword id="KW-0547">Nucleotide-binding</keyword>
<keyword id="KW-0808">Transferase</keyword>
<comment type="function">
    <text evidence="1">Catalyzes the specific phosphorylation of the 3-hydroxyl group of shikimic acid using ATP as a cosubstrate.</text>
</comment>
<comment type="catalytic activity">
    <reaction evidence="1">
        <text>shikimate + ATP = 3-phosphoshikimate + ADP + H(+)</text>
        <dbReference type="Rhea" id="RHEA:13121"/>
        <dbReference type="ChEBI" id="CHEBI:15378"/>
        <dbReference type="ChEBI" id="CHEBI:30616"/>
        <dbReference type="ChEBI" id="CHEBI:36208"/>
        <dbReference type="ChEBI" id="CHEBI:145989"/>
        <dbReference type="ChEBI" id="CHEBI:456216"/>
        <dbReference type="EC" id="2.7.1.71"/>
    </reaction>
</comment>
<comment type="cofactor">
    <cofactor evidence="1">
        <name>Mg(2+)</name>
        <dbReference type="ChEBI" id="CHEBI:18420"/>
    </cofactor>
    <text evidence="1">Binds 1 Mg(2+) ion per subunit.</text>
</comment>
<comment type="pathway">
    <text evidence="1">Metabolic intermediate biosynthesis; chorismate biosynthesis; chorismate from D-erythrose 4-phosphate and phosphoenolpyruvate: step 5/7.</text>
</comment>
<comment type="subunit">
    <text evidence="1">Monomer.</text>
</comment>
<comment type="subcellular location">
    <subcellularLocation>
        <location evidence="1">Cytoplasm</location>
    </subcellularLocation>
</comment>
<comment type="similarity">
    <text evidence="1">Belongs to the shikimate kinase family.</text>
</comment>
<reference key="1">
    <citation type="journal article" date="2004" name="Proc. Natl. Acad. Sci. U.S.A.">
        <title>Complete genomes of two clinical Staphylococcus aureus strains: evidence for the rapid evolution of virulence and drug resistance.</title>
        <authorList>
            <person name="Holden M.T.G."/>
            <person name="Feil E.J."/>
            <person name="Lindsay J.A."/>
            <person name="Peacock S.J."/>
            <person name="Day N.P.J."/>
            <person name="Enright M.C."/>
            <person name="Foster T.J."/>
            <person name="Moore C.E."/>
            <person name="Hurst L."/>
            <person name="Atkin R."/>
            <person name="Barron A."/>
            <person name="Bason N."/>
            <person name="Bentley S.D."/>
            <person name="Chillingworth C."/>
            <person name="Chillingworth T."/>
            <person name="Churcher C."/>
            <person name="Clark L."/>
            <person name="Corton C."/>
            <person name="Cronin A."/>
            <person name="Doggett J."/>
            <person name="Dowd L."/>
            <person name="Feltwell T."/>
            <person name="Hance Z."/>
            <person name="Harris B."/>
            <person name="Hauser H."/>
            <person name="Holroyd S."/>
            <person name="Jagels K."/>
            <person name="James K.D."/>
            <person name="Lennard N."/>
            <person name="Line A."/>
            <person name="Mayes R."/>
            <person name="Moule S."/>
            <person name="Mungall K."/>
            <person name="Ormond D."/>
            <person name="Quail M.A."/>
            <person name="Rabbinowitsch E."/>
            <person name="Rutherford K.M."/>
            <person name="Sanders M."/>
            <person name="Sharp S."/>
            <person name="Simmonds M."/>
            <person name="Stevens K."/>
            <person name="Whitehead S."/>
            <person name="Barrell B.G."/>
            <person name="Spratt B.G."/>
            <person name="Parkhill J."/>
        </authorList>
    </citation>
    <scope>NUCLEOTIDE SEQUENCE [LARGE SCALE GENOMIC DNA]</scope>
    <source>
        <strain>MSSA476</strain>
    </source>
</reference>
<organism>
    <name type="scientific">Staphylococcus aureus (strain MSSA476)</name>
    <dbReference type="NCBI Taxonomy" id="282459"/>
    <lineage>
        <taxon>Bacteria</taxon>
        <taxon>Bacillati</taxon>
        <taxon>Bacillota</taxon>
        <taxon>Bacilli</taxon>
        <taxon>Bacillales</taxon>
        <taxon>Staphylococcaceae</taxon>
        <taxon>Staphylococcus</taxon>
    </lineage>
</organism>
<accession>Q6G928</accession>
<sequence>MNHDKSPIILIGFMGTGKSTIGKYVADEQNLSFIDIDSYIEEKYKLTIPEIFSKHGEQYFRNLEFTCLQECINTADIIATGGGIIESEEAFNFLKNQKNIIWLDCNIDIIYSRINDDPHRPNANNKTIKQLNDLYCSRNLRYNEIAFKKFDSHLLSISEIYYELLNLIKASDQY</sequence>
<gene>
    <name evidence="1" type="primary">aroK</name>
    <name type="ordered locus">SAS1476</name>
</gene>
<evidence type="ECO:0000255" key="1">
    <source>
        <dbReference type="HAMAP-Rule" id="MF_00109"/>
    </source>
</evidence>